<feature type="chain" id="PRO_1000122120" description="Integration host factor subunit alpha">
    <location>
        <begin position="1"/>
        <end position="98"/>
    </location>
</feature>
<evidence type="ECO:0000255" key="1">
    <source>
        <dbReference type="HAMAP-Rule" id="MF_00380"/>
    </source>
</evidence>
<dbReference type="EMBL" id="CP001182">
    <property type="protein sequence ID" value="ACJ40125.1"/>
    <property type="molecule type" value="Genomic_DNA"/>
</dbReference>
<dbReference type="RefSeq" id="WP_000126166.1">
    <property type="nucleotide sequence ID" value="NC_011586.2"/>
</dbReference>
<dbReference type="SMR" id="B7I698"/>
<dbReference type="KEGG" id="abn:AB57_0706"/>
<dbReference type="HOGENOM" id="CLU_105066_1_3_6"/>
<dbReference type="Proteomes" id="UP000007094">
    <property type="component" value="Chromosome"/>
</dbReference>
<dbReference type="GO" id="GO:0005829">
    <property type="term" value="C:cytosol"/>
    <property type="evidence" value="ECO:0007669"/>
    <property type="project" value="TreeGrafter"/>
</dbReference>
<dbReference type="GO" id="GO:0003677">
    <property type="term" value="F:DNA binding"/>
    <property type="evidence" value="ECO:0007669"/>
    <property type="project" value="UniProtKB-UniRule"/>
</dbReference>
<dbReference type="GO" id="GO:0030527">
    <property type="term" value="F:structural constituent of chromatin"/>
    <property type="evidence" value="ECO:0007669"/>
    <property type="project" value="InterPro"/>
</dbReference>
<dbReference type="GO" id="GO:0006310">
    <property type="term" value="P:DNA recombination"/>
    <property type="evidence" value="ECO:0007669"/>
    <property type="project" value="UniProtKB-UniRule"/>
</dbReference>
<dbReference type="GO" id="GO:0009893">
    <property type="term" value="P:positive regulation of metabolic process"/>
    <property type="evidence" value="ECO:0007669"/>
    <property type="project" value="UniProtKB-ARBA"/>
</dbReference>
<dbReference type="GO" id="GO:0006355">
    <property type="term" value="P:regulation of DNA-templated transcription"/>
    <property type="evidence" value="ECO:0007669"/>
    <property type="project" value="UniProtKB-UniRule"/>
</dbReference>
<dbReference type="GO" id="GO:0006417">
    <property type="term" value="P:regulation of translation"/>
    <property type="evidence" value="ECO:0007669"/>
    <property type="project" value="UniProtKB-UniRule"/>
</dbReference>
<dbReference type="CDD" id="cd13835">
    <property type="entry name" value="IHF_A"/>
    <property type="match status" value="1"/>
</dbReference>
<dbReference type="FunFam" id="4.10.520.10:FF:000002">
    <property type="entry name" value="Integration host factor subunit alpha"/>
    <property type="match status" value="1"/>
</dbReference>
<dbReference type="Gene3D" id="4.10.520.10">
    <property type="entry name" value="IHF-like DNA-binding proteins"/>
    <property type="match status" value="1"/>
</dbReference>
<dbReference type="HAMAP" id="MF_00380">
    <property type="entry name" value="IHF_alpha"/>
    <property type="match status" value="1"/>
</dbReference>
<dbReference type="InterPro" id="IPR000119">
    <property type="entry name" value="Hist_DNA-bd"/>
</dbReference>
<dbReference type="InterPro" id="IPR020816">
    <property type="entry name" value="Histone-like_DNA-bd_CS"/>
</dbReference>
<dbReference type="InterPro" id="IPR010992">
    <property type="entry name" value="IHF-like_DNA-bd_dom_sf"/>
</dbReference>
<dbReference type="InterPro" id="IPR005684">
    <property type="entry name" value="IHF_alpha"/>
</dbReference>
<dbReference type="NCBIfam" id="TIGR00987">
    <property type="entry name" value="himA"/>
    <property type="match status" value="1"/>
</dbReference>
<dbReference type="NCBIfam" id="NF001401">
    <property type="entry name" value="PRK00285.1"/>
    <property type="match status" value="1"/>
</dbReference>
<dbReference type="PANTHER" id="PTHR33175">
    <property type="entry name" value="DNA-BINDING PROTEIN HU"/>
    <property type="match status" value="1"/>
</dbReference>
<dbReference type="PANTHER" id="PTHR33175:SF2">
    <property type="entry name" value="INTEGRATION HOST FACTOR SUBUNIT ALPHA"/>
    <property type="match status" value="1"/>
</dbReference>
<dbReference type="Pfam" id="PF00216">
    <property type="entry name" value="Bac_DNA_binding"/>
    <property type="match status" value="1"/>
</dbReference>
<dbReference type="PRINTS" id="PR01727">
    <property type="entry name" value="DNABINDINGHU"/>
</dbReference>
<dbReference type="SMART" id="SM00411">
    <property type="entry name" value="BHL"/>
    <property type="match status" value="1"/>
</dbReference>
<dbReference type="SUPFAM" id="SSF47729">
    <property type="entry name" value="IHF-like DNA-binding proteins"/>
    <property type="match status" value="1"/>
</dbReference>
<dbReference type="PROSITE" id="PS00045">
    <property type="entry name" value="HISTONE_LIKE"/>
    <property type="match status" value="1"/>
</dbReference>
<organism>
    <name type="scientific">Acinetobacter baumannii (strain AB0057)</name>
    <dbReference type="NCBI Taxonomy" id="480119"/>
    <lineage>
        <taxon>Bacteria</taxon>
        <taxon>Pseudomonadati</taxon>
        <taxon>Pseudomonadota</taxon>
        <taxon>Gammaproteobacteria</taxon>
        <taxon>Moraxellales</taxon>
        <taxon>Moraxellaceae</taxon>
        <taxon>Acinetobacter</taxon>
        <taxon>Acinetobacter calcoaceticus/baumannii complex</taxon>
    </lineage>
</organism>
<gene>
    <name evidence="1" type="primary">ihfA</name>
    <name evidence="1" type="synonym">himA</name>
    <name type="ordered locus">AB57_0706</name>
</gene>
<accession>B7I698</accession>
<reference key="1">
    <citation type="journal article" date="2008" name="J. Bacteriol.">
        <title>Comparative genome sequence analysis of multidrug-resistant Acinetobacter baumannii.</title>
        <authorList>
            <person name="Adams M.D."/>
            <person name="Goglin K."/>
            <person name="Molyneaux N."/>
            <person name="Hujer K.M."/>
            <person name="Lavender H."/>
            <person name="Jamison J.J."/>
            <person name="MacDonald I.J."/>
            <person name="Martin K.M."/>
            <person name="Russo T."/>
            <person name="Campagnari A.A."/>
            <person name="Hujer A.M."/>
            <person name="Bonomo R.A."/>
            <person name="Gill S.R."/>
        </authorList>
    </citation>
    <scope>NUCLEOTIDE SEQUENCE [LARGE SCALE GENOMIC DNA]</scope>
    <source>
        <strain>AB0057</strain>
    </source>
</reference>
<sequence>MTALTKADMADHLSELTSLNRREAKQMVELFFDEISQALIAGEQVKLSGFGNFELRDKRERPGRNPKTGEEIPISARRVVTFRAGQKFRQRVGNEQID</sequence>
<proteinExistence type="inferred from homology"/>
<comment type="function">
    <text evidence="1">This protein is one of the two subunits of integration host factor, a specific DNA-binding protein that functions in genetic recombination as well as in transcriptional and translational control.</text>
</comment>
<comment type="subunit">
    <text evidence="1">Heterodimer of an alpha and a beta chain.</text>
</comment>
<comment type="similarity">
    <text evidence="1">Belongs to the bacterial histone-like protein family.</text>
</comment>
<name>IHFA_ACIB5</name>
<keyword id="KW-0233">DNA recombination</keyword>
<keyword id="KW-0238">DNA-binding</keyword>
<keyword id="KW-0804">Transcription</keyword>
<keyword id="KW-0805">Transcription regulation</keyword>
<keyword id="KW-0810">Translation regulation</keyword>
<protein>
    <recommendedName>
        <fullName evidence="1">Integration host factor subunit alpha</fullName>
        <shortName evidence="1">IHF-alpha</shortName>
    </recommendedName>
</protein>